<accession>Q9FD71</accession>
<protein>
    <recommendedName>
        <fullName>Hydroxymethylglutaryl-CoA synthase</fullName>
        <shortName>HMG-CoA synthase</shortName>
        <shortName>HMGCS</shortName>
        <ecNumber>2.3.3.10</ecNumber>
    </recommendedName>
    <alternativeName>
        <fullName>3-hydroxy-3-methylglutaryl coenzyme A synthase</fullName>
    </alternativeName>
</protein>
<keyword id="KW-0002">3D-structure</keyword>
<keyword id="KW-0012">Acyltransferase</keyword>
<keyword id="KW-0414">Isoprene biosynthesis</keyword>
<keyword id="KW-0808">Transferase</keyword>
<evidence type="ECO:0000250" key="1"/>
<evidence type="ECO:0000250" key="2">
    <source>
        <dbReference type="UniProtKB" id="P54868"/>
    </source>
</evidence>
<evidence type="ECO:0000269" key="3">
    <source>
    </source>
</evidence>
<evidence type="ECO:0000269" key="4">
    <source>
    </source>
</evidence>
<evidence type="ECO:0000269" key="5">
    <source>
    </source>
</evidence>
<evidence type="ECO:0000269" key="6">
    <source>
    </source>
</evidence>
<evidence type="ECO:0000269" key="7">
    <source>
    </source>
</evidence>
<evidence type="ECO:0000269" key="8">
    <source>
    </source>
</evidence>
<evidence type="ECO:0000305" key="9"/>
<evidence type="ECO:0007829" key="10">
    <source>
        <dbReference type="PDB" id="3V4N"/>
    </source>
</evidence>
<organism>
    <name type="scientific">Enterococcus faecalis</name>
    <name type="common">Streptococcus faecalis</name>
    <dbReference type="NCBI Taxonomy" id="1351"/>
    <lineage>
        <taxon>Bacteria</taxon>
        <taxon>Bacillati</taxon>
        <taxon>Bacillota</taxon>
        <taxon>Bacilli</taxon>
        <taxon>Lactobacillales</taxon>
        <taxon>Enterococcaceae</taxon>
        <taxon>Enterococcus</taxon>
    </lineage>
</organism>
<sequence length="383" mass="42151">MTIGIDKISFFVPPYYIDMTALAEARNVDPGKFHIGIGQDQMAVNPISQDIVTFAANAAEAILTKEDKEAIDMVIVGTESSIDESKAAAVVLHRLMGIQPFARSFEIKEACYGATAGLQLAKNHVALHPDKKVLVVAADIAKYGLNSGGEPTQGAGAVAMLVASEPRILALKEDNVMLTQDIYDFWRPTGHPYPMVDGPLSNETYIQSFAQVWDEHKKRTGLDFADYDALAFHIPYTKMGKKALLAKISDQTEAEQERILARYEESIIYSRRVGNLYTGSLYLGLISLLENATTLTAGNQIGLFSYGSGAVAEFFTGELVAGYQNHLQKETHLALLDNRTELSIAEYEAMFAETLDTDIDQTLEDELKYSISAINNTVRSYRN</sequence>
<feature type="chain" id="PRO_0000429271" description="Hydroxymethylglutaryl-CoA synthase">
    <location>
        <begin position="1"/>
        <end position="383"/>
    </location>
</feature>
<feature type="active site" description="Proton donor/acceptor" evidence="1">
    <location>
        <position position="79"/>
    </location>
</feature>
<feature type="active site" description="Acyl-thioester intermediate" evidence="5">
    <location>
        <position position="111"/>
    </location>
</feature>
<feature type="active site" description="Proton donor/acceptor" evidence="1">
    <location>
        <position position="233"/>
    </location>
</feature>
<feature type="binding site" evidence="2">
    <location>
        <position position="29"/>
    </location>
    <ligand>
        <name>(3S)-3-hydroxy-3-methylglutaryl-CoA</name>
        <dbReference type="ChEBI" id="CHEBI:43074"/>
    </ligand>
</feature>
<feature type="binding site" evidence="2">
    <location>
        <position position="111"/>
    </location>
    <ligand>
        <name>(3S)-3-hydroxy-3-methylglutaryl-CoA</name>
        <dbReference type="ChEBI" id="CHEBI:43074"/>
    </ligand>
</feature>
<feature type="binding site" evidence="2">
    <location>
        <position position="152"/>
    </location>
    <ligand>
        <name>(3S)-3-hydroxy-3-methylglutaryl-CoA</name>
        <dbReference type="ChEBI" id="CHEBI:43074"/>
    </ligand>
</feature>
<feature type="binding site" evidence="2">
    <location>
        <position position="201"/>
    </location>
    <ligand>
        <name>(3S)-3-hydroxy-3-methylglutaryl-CoA</name>
        <dbReference type="ChEBI" id="CHEBI:43074"/>
    </ligand>
</feature>
<feature type="binding site" evidence="2">
    <location>
        <position position="233"/>
    </location>
    <ligand>
        <name>(3S)-3-hydroxy-3-methylglutaryl-CoA</name>
        <dbReference type="ChEBI" id="CHEBI:43074"/>
    </ligand>
</feature>
<feature type="binding site" evidence="2">
    <location>
        <position position="242"/>
    </location>
    <ligand>
        <name>(3S)-3-hydroxy-3-methylglutaryl-CoA</name>
        <dbReference type="ChEBI" id="CHEBI:43074"/>
    </ligand>
</feature>
<feature type="binding site" evidence="2">
    <location>
        <position position="275"/>
    </location>
    <ligand>
        <name>(3S)-3-hydroxy-3-methylglutaryl-CoA</name>
        <dbReference type="ChEBI" id="CHEBI:43074"/>
    </ligand>
</feature>
<feature type="binding site" evidence="2">
    <location>
        <position position="308"/>
    </location>
    <ligand>
        <name>(3S)-3-hydroxy-3-methylglutaryl-CoA</name>
        <dbReference type="ChEBI" id="CHEBI:43074"/>
    </ligand>
</feature>
<feature type="mutagenesis site" description="140-fold increase in the overall reaction rate, and 86-fold increase in catalytic efficiency." evidence="6">
    <original>A</original>
    <variation>G</variation>
    <location>
        <position position="110"/>
    </location>
</feature>
<feature type="strand" evidence="10">
    <location>
        <begin position="3"/>
        <end position="11"/>
    </location>
</feature>
<feature type="strand" evidence="10">
    <location>
        <begin position="14"/>
        <end position="18"/>
    </location>
</feature>
<feature type="helix" evidence="10">
    <location>
        <begin position="19"/>
        <end position="25"/>
    </location>
</feature>
<feature type="helix" evidence="10">
    <location>
        <begin position="31"/>
        <end position="34"/>
    </location>
</feature>
<feature type="turn" evidence="10">
    <location>
        <begin position="35"/>
        <end position="37"/>
    </location>
</feature>
<feature type="strand" evidence="10">
    <location>
        <begin position="41"/>
        <end position="43"/>
    </location>
</feature>
<feature type="helix" evidence="10">
    <location>
        <begin position="51"/>
        <end position="60"/>
    </location>
</feature>
<feature type="helix" evidence="10">
    <location>
        <begin position="65"/>
        <end position="70"/>
    </location>
</feature>
<feature type="strand" evidence="10">
    <location>
        <begin position="71"/>
        <end position="77"/>
    </location>
</feature>
<feature type="strand" evidence="10">
    <location>
        <begin position="82"/>
        <end position="86"/>
    </location>
</feature>
<feature type="helix" evidence="10">
    <location>
        <begin position="88"/>
        <end position="95"/>
    </location>
</feature>
<feature type="strand" evidence="10">
    <location>
        <begin position="103"/>
        <end position="109"/>
    </location>
</feature>
<feature type="helix" evidence="10">
    <location>
        <begin position="110"/>
        <end position="112"/>
    </location>
</feature>
<feature type="helix" evidence="10">
    <location>
        <begin position="113"/>
        <end position="127"/>
    </location>
</feature>
<feature type="strand" evidence="10">
    <location>
        <begin position="132"/>
        <end position="141"/>
    </location>
</feature>
<feature type="helix" evidence="10">
    <location>
        <begin position="150"/>
        <end position="152"/>
    </location>
</feature>
<feature type="strand" evidence="10">
    <location>
        <begin position="154"/>
        <end position="165"/>
    </location>
</feature>
<feature type="strand" evidence="10">
    <location>
        <begin position="167"/>
        <end position="171"/>
    </location>
</feature>
<feature type="strand" evidence="10">
    <location>
        <begin position="176"/>
        <end position="179"/>
    </location>
</feature>
<feature type="strand" evidence="10">
    <location>
        <begin position="184"/>
        <end position="186"/>
    </location>
</feature>
<feature type="helix" evidence="10">
    <location>
        <begin position="198"/>
        <end position="220"/>
    </location>
</feature>
<feature type="helix" evidence="10">
    <location>
        <begin position="224"/>
        <end position="226"/>
    </location>
</feature>
<feature type="strand" evidence="10">
    <location>
        <begin position="228"/>
        <end position="232"/>
    </location>
</feature>
<feature type="helix" evidence="10">
    <location>
        <begin position="237"/>
        <end position="247"/>
    </location>
</feature>
<feature type="helix" evidence="10">
    <location>
        <begin position="253"/>
        <end position="266"/>
    </location>
</feature>
<feature type="turn" evidence="10">
    <location>
        <begin position="267"/>
        <end position="269"/>
    </location>
</feature>
<feature type="helix" evidence="10">
    <location>
        <begin position="270"/>
        <end position="272"/>
    </location>
</feature>
<feature type="helix" evidence="10">
    <location>
        <begin position="277"/>
        <end position="279"/>
    </location>
</feature>
<feature type="helix" evidence="10">
    <location>
        <begin position="280"/>
        <end position="291"/>
    </location>
</feature>
<feature type="strand" evidence="10">
    <location>
        <begin position="300"/>
        <end position="307"/>
    </location>
</feature>
<feature type="turn" evidence="10">
    <location>
        <begin position="308"/>
        <end position="310"/>
    </location>
</feature>
<feature type="strand" evidence="10">
    <location>
        <begin position="311"/>
        <end position="319"/>
    </location>
</feature>
<feature type="helix" evidence="10">
    <location>
        <begin position="323"/>
        <end position="325"/>
    </location>
</feature>
<feature type="helix" evidence="10">
    <location>
        <begin position="329"/>
        <end position="337"/>
    </location>
</feature>
<feature type="helix" evidence="10">
    <location>
        <begin position="344"/>
        <end position="352"/>
    </location>
</feature>
<feature type="strand" evidence="10">
    <location>
        <begin position="371"/>
        <end position="375"/>
    </location>
</feature>
<feature type="strand" evidence="10">
    <location>
        <begin position="378"/>
        <end position="381"/>
    </location>
</feature>
<proteinExistence type="evidence at protein level"/>
<dbReference type="EC" id="2.3.3.10"/>
<dbReference type="EMBL" id="AF290092">
    <property type="protein sequence ID" value="AAG02438.1"/>
    <property type="molecule type" value="Genomic_DNA"/>
</dbReference>
<dbReference type="RefSeq" id="WP_002357756.1">
    <property type="nucleotide sequence ID" value="NZ_WYAE01000001.1"/>
</dbReference>
<dbReference type="PDB" id="1X9E">
    <property type="method" value="X-ray"/>
    <property type="resolution" value="2.40 A"/>
    <property type="chains" value="A/B=1-383"/>
</dbReference>
<dbReference type="PDB" id="1YSL">
    <property type="method" value="X-ray"/>
    <property type="resolution" value="1.90 A"/>
    <property type="chains" value="A/B=1-383"/>
</dbReference>
<dbReference type="PDB" id="2HDB">
    <property type="method" value="X-ray"/>
    <property type="resolution" value="2.20 A"/>
    <property type="chains" value="A/B=1-383"/>
</dbReference>
<dbReference type="PDB" id="3V4N">
    <property type="method" value="X-ray"/>
    <property type="resolution" value="1.60 A"/>
    <property type="chains" value="A/B/C/D=1-383"/>
</dbReference>
<dbReference type="PDB" id="3V4X">
    <property type="method" value="X-ray"/>
    <property type="resolution" value="1.95 A"/>
    <property type="chains" value="A/B/C/D=1-383"/>
</dbReference>
<dbReference type="PDBsum" id="1X9E"/>
<dbReference type="PDBsum" id="1YSL"/>
<dbReference type="PDBsum" id="2HDB"/>
<dbReference type="PDBsum" id="3V4N"/>
<dbReference type="PDBsum" id="3V4X"/>
<dbReference type="SMR" id="Q9FD71"/>
<dbReference type="eggNOG" id="COG3425">
    <property type="taxonomic scope" value="Bacteria"/>
</dbReference>
<dbReference type="BioCyc" id="MetaCyc:MONOMER-18245"/>
<dbReference type="BRENDA" id="2.3.3.10">
    <property type="organism ID" value="2095"/>
</dbReference>
<dbReference type="SABIO-RK" id="Q9FD71"/>
<dbReference type="UniPathway" id="UPA00058">
    <property type="reaction ID" value="UER00102"/>
</dbReference>
<dbReference type="EvolutionaryTrace" id="Q9FD71"/>
<dbReference type="GO" id="GO:0004421">
    <property type="term" value="F:hydroxymethylglutaryl-CoA synthase activity"/>
    <property type="evidence" value="ECO:0007669"/>
    <property type="project" value="UniProtKB-EC"/>
</dbReference>
<dbReference type="GO" id="GO:0006084">
    <property type="term" value="P:acetyl-CoA metabolic process"/>
    <property type="evidence" value="ECO:0007669"/>
    <property type="project" value="InterPro"/>
</dbReference>
<dbReference type="GO" id="GO:0008299">
    <property type="term" value="P:isoprenoid biosynthetic process"/>
    <property type="evidence" value="ECO:0007669"/>
    <property type="project" value="UniProtKB-KW"/>
</dbReference>
<dbReference type="CDD" id="cd00827">
    <property type="entry name" value="init_cond_enzymes"/>
    <property type="match status" value="1"/>
</dbReference>
<dbReference type="Gene3D" id="3.40.47.10">
    <property type="match status" value="2"/>
</dbReference>
<dbReference type="InterPro" id="IPR013746">
    <property type="entry name" value="HMG_CoA_synt_C_dom"/>
</dbReference>
<dbReference type="InterPro" id="IPR013528">
    <property type="entry name" value="HMG_CoA_synth_N"/>
</dbReference>
<dbReference type="InterPro" id="IPR011554">
    <property type="entry name" value="HMG_CoA_synthase_prok"/>
</dbReference>
<dbReference type="InterPro" id="IPR016039">
    <property type="entry name" value="Thiolase-like"/>
</dbReference>
<dbReference type="NCBIfam" id="TIGR01835">
    <property type="entry name" value="HMG-CoA-S_prok"/>
    <property type="match status" value="1"/>
</dbReference>
<dbReference type="PANTHER" id="PTHR43323">
    <property type="entry name" value="3-HYDROXY-3-METHYLGLUTARYL COENZYME A SYNTHASE"/>
    <property type="match status" value="1"/>
</dbReference>
<dbReference type="PANTHER" id="PTHR43323:SF2">
    <property type="entry name" value="HYDROXYMETHYLGLUTARYL-COA SYNTHASE"/>
    <property type="match status" value="1"/>
</dbReference>
<dbReference type="Pfam" id="PF08540">
    <property type="entry name" value="HMG_CoA_synt_C"/>
    <property type="match status" value="2"/>
</dbReference>
<dbReference type="Pfam" id="PF01154">
    <property type="entry name" value="HMG_CoA_synt_N"/>
    <property type="match status" value="1"/>
</dbReference>
<dbReference type="SUPFAM" id="SSF53901">
    <property type="entry name" value="Thiolase-like"/>
    <property type="match status" value="2"/>
</dbReference>
<name>HMGCS_ENTFL</name>
<reference key="1">
    <citation type="journal article" date="2000" name="J. Bacteriol.">
        <title>Identification, evolution, and essentiality of the mevalonate pathway for isopentenyl diphosphate biosynthesis in gram-positive cocci.</title>
        <authorList>
            <person name="Wilding E.I."/>
            <person name="Brown J.R."/>
            <person name="Bryant A.P."/>
            <person name="Chalker A.F."/>
            <person name="Holmes D.J."/>
            <person name="Ingraham K.A."/>
            <person name="Iordanescu S."/>
            <person name="So C.Y."/>
            <person name="Rosenberg M."/>
            <person name="Gwynn M.N."/>
        </authorList>
    </citation>
    <scope>NUCLEOTIDE SEQUENCE [GENOMIC DNA]</scope>
    <scope>PATHWAY</scope>
</reference>
<reference key="2">
    <citation type="journal article" date="2002" name="J. Bacteriol.">
        <title>Enterococcus faecalis 3-hydroxy-3-methylglutaryl coenzyme A synthase, an enzyme of isopentenyl diphosphate biosynthesis.</title>
        <authorList>
            <person name="Sutherlin A."/>
            <person name="Hedl M."/>
            <person name="Sanchez-Neri B."/>
            <person name="Burgner J.W. II"/>
            <person name="Stauffacher C.V."/>
            <person name="Rodwell V.W."/>
        </authorList>
    </citation>
    <scope>FUNCTION</scope>
    <scope>CATALYTIC ACTIVITY</scope>
    <scope>BIOPHYSICOCHEMICAL PROPERTIES</scope>
    <scope>SUBUNIT</scope>
</reference>
<reference key="3">
    <citation type="journal article" date="2013" name="J. Bacteriol.">
        <title>Expression in Haloferax volcanii of 3-hydroxy-3-methylglutaryl coenzyme A synthase facilitates isolation and characterization of the active form of a key enzyme required for polyisoprenoid cell membrane biosynthesis in halophilic archaea.</title>
        <authorList>
            <person name="VanNice J.C."/>
            <person name="Skaff D.A."/>
            <person name="Wyckoff G.J."/>
            <person name="Miziorko H.M."/>
        </authorList>
    </citation>
    <scope>FUNCTION</scope>
    <scope>CATALYTIC ACTIVITY</scope>
    <scope>KINETIC PARAMETERS</scope>
    <scope>ACTIVITY REGULATION</scope>
</reference>
<reference key="4">
    <citation type="journal article" date="2005" name="Biochemistry">
        <title>X-ray crystal structures of HMG-CoA synthase from Enterococcus faecalis and a complex with its second substrate/inhibitor acetoacetyl-CoA.</title>
        <authorList>
            <person name="Steussy C.N."/>
            <person name="Vartia A.A."/>
            <person name="Burgner J.W."/>
            <person name="Sutherlin A."/>
            <person name="Rodwell V.W."/>
            <person name="Stauffacher C.V."/>
        </authorList>
    </citation>
    <scope>X-RAY CRYSTALLOGRAPHY (1.90 ANGSTROMS) OF APOENZYME AND OF A COVALENT ACETOACETYL-ENZYME ADDUCT IN COMPLEX WITH COA</scope>
    <scope>SUBUNIT</scope>
    <scope>ACTIVITY REGULATION</scope>
    <scope>ACTIVE SITE</scope>
    <scope>REACTION MECHANISM</scope>
</reference>
<reference key="5">
    <citation type="journal article" date="2006" name="Biochemistry">
        <title>A structural limitation on enzyme activity: the case of HMG-CoA synthase.</title>
        <authorList>
            <person name="Steussy C.N."/>
            <person name="Robison A.D."/>
            <person name="Tetrick A.M."/>
            <person name="Knight J.T."/>
            <person name="Rodwell V.W."/>
            <person name="Stauffacher C.V."/>
            <person name="Sutherlin A.L."/>
        </authorList>
    </citation>
    <scope>X-RAY CRYSTALLOGRAPHY (2.20 ANGSTROMS) OF MUTANT GLY-110</scope>
    <scope>MUTAGENESIS OF ALA-110</scope>
</reference>
<reference key="6">
    <citation type="journal article" date="2012" name="Biochemistry">
        <title>Biochemical and structural basis for inhibition of Enterococcus faecalis hydroxymethylglutaryl-CoA synthase, mvaS, by hymeglusin.</title>
        <authorList>
            <person name="Skaff D.A."/>
            <person name="Ramyar K.X."/>
            <person name="McWhorter W.J."/>
            <person name="Barta M.L."/>
            <person name="Geisbrecht B.V."/>
            <person name="Miziorko H.M."/>
        </authorList>
    </citation>
    <scope>X-RAY CRYSTALLOGRAPHY (1.60 ANGSTROMS) OF APOENZYME AND IN COMPLEX WITH HYMEGLUSIN INHIBITOR VIA A COVALENT LINKAGE</scope>
    <scope>ACTIVITY REGULATION</scope>
</reference>
<comment type="function">
    <text evidence="4 8">Catalyzes the condensation of acetyl-CoA with acetoacetyl-CoA to form 3-hydroxy-3-methylglutaryl-CoA (HMG-CoA). Functions in the mevalonate (MVA) pathway leading to isopentenyl diphosphate (IPP), a key precursor for the biosynthesis of isoprenoid compounds.</text>
</comment>
<comment type="catalytic activity">
    <reaction evidence="4 8">
        <text>acetoacetyl-CoA + acetyl-CoA + H2O = (3S)-3-hydroxy-3-methylglutaryl-CoA + CoA + H(+)</text>
        <dbReference type="Rhea" id="RHEA:10188"/>
        <dbReference type="ChEBI" id="CHEBI:15377"/>
        <dbReference type="ChEBI" id="CHEBI:15378"/>
        <dbReference type="ChEBI" id="CHEBI:43074"/>
        <dbReference type="ChEBI" id="CHEBI:57286"/>
        <dbReference type="ChEBI" id="CHEBI:57287"/>
        <dbReference type="ChEBI" id="CHEBI:57288"/>
        <dbReference type="EC" id="2.3.3.10"/>
    </reaction>
</comment>
<comment type="activity regulation">
    <text evidence="5 7 8">Is sensitive to feedback substrate inhibition by acetoacetyl-CoA. Is inactivated by hymeglusin, which also blocks the growth of E.faecalis, indicating the critical role that the mevalonate pathway plays in isoprenoid biosynthesis.</text>
</comment>
<comment type="biophysicochemical properties">
    <kinetics>
        <KM evidence="4 8">350 uM for acetyl-CoA</KM>
        <KM evidence="4 8">10 uM for acetoacetyl-CoA</KM>
        <KM evidence="4 8">400 uM for acetyl-CoA</KM>
        <KM evidence="4 8">0.5 uM for acetoacetyl-CoA</KM>
        <Vmax evidence="4 8">10.0 umol/min/mg enzyme</Vmax>
        <Vmax evidence="4 8">5.3 umol/min/mg enzyme</Vmax>
    </kinetics>
    <phDependence>
        <text evidence="4">Optimum pH is about 9.8.</text>
    </phDependence>
    <temperatureDependence>
        <text evidence="4">Optimum temperature is 37 degrees Celsius.</text>
    </temperatureDependence>
</comment>
<comment type="pathway">
    <text evidence="3">Metabolic intermediate biosynthesis; (R)-mevalonate biosynthesis; (R)-mevalonate from acetyl-CoA: step 2/3.</text>
</comment>
<comment type="subunit">
    <text evidence="4 5 7">Homodimer.</text>
</comment>
<comment type="similarity">
    <text evidence="9">Belongs to the thiolase-like superfamily. HMG-CoA synthase family.</text>
</comment>
<gene>
    <name type="primary">mvaS</name>
</gene>